<organism>
    <name type="scientific">Rattus norvegicus</name>
    <name type="common">Rat</name>
    <dbReference type="NCBI Taxonomy" id="10116"/>
    <lineage>
        <taxon>Eukaryota</taxon>
        <taxon>Metazoa</taxon>
        <taxon>Chordata</taxon>
        <taxon>Craniata</taxon>
        <taxon>Vertebrata</taxon>
        <taxon>Euteleostomi</taxon>
        <taxon>Mammalia</taxon>
        <taxon>Eutheria</taxon>
        <taxon>Euarchontoglires</taxon>
        <taxon>Glires</taxon>
        <taxon>Rodentia</taxon>
        <taxon>Myomorpha</taxon>
        <taxon>Muroidea</taxon>
        <taxon>Muridae</taxon>
        <taxon>Murinae</taxon>
        <taxon>Rattus</taxon>
    </lineage>
</organism>
<keyword id="KW-0106">Calcium</keyword>
<keyword id="KW-1003">Cell membrane</keyword>
<keyword id="KW-1015">Disulfide bond</keyword>
<keyword id="KW-0297">G-protein coupled receptor</keyword>
<keyword id="KW-0325">Glycoprotein</keyword>
<keyword id="KW-0449">Lipoprotein</keyword>
<keyword id="KW-0472">Membrane</keyword>
<keyword id="KW-0479">Metal-binding</keyword>
<keyword id="KW-0564">Palmitate</keyword>
<keyword id="KW-0675">Receptor</keyword>
<keyword id="KW-1185">Reference proteome</keyword>
<keyword id="KW-0807">Transducer</keyword>
<keyword id="KW-0812">Transmembrane</keyword>
<keyword id="KW-1133">Transmembrane helix</keyword>
<name>MC4R_RAT</name>
<dbReference type="EMBL" id="U67863">
    <property type="protein sequence ID" value="AAB36517.1"/>
    <property type="molecule type" value="mRNA"/>
</dbReference>
<dbReference type="PIR" id="B57055">
    <property type="entry name" value="B57055"/>
</dbReference>
<dbReference type="RefSeq" id="NP_037231.1">
    <property type="nucleotide sequence ID" value="NM_013099.3"/>
</dbReference>
<dbReference type="SMR" id="P70596"/>
<dbReference type="FunCoup" id="P70596">
    <property type="interactions" value="105"/>
</dbReference>
<dbReference type="STRING" id="10116.ENSRNOP00000025223"/>
<dbReference type="BindingDB" id="P70596"/>
<dbReference type="ChEMBL" id="CHEMBL2700"/>
<dbReference type="DrugCentral" id="P70596"/>
<dbReference type="GuidetoPHARMACOLOGY" id="285"/>
<dbReference type="GlyCosmos" id="P70596">
    <property type="glycosylation" value="3 sites, No reported glycans"/>
</dbReference>
<dbReference type="GlyGen" id="P70596">
    <property type="glycosylation" value="3 sites"/>
</dbReference>
<dbReference type="PhosphoSitePlus" id="P70596"/>
<dbReference type="PaxDb" id="10116-ENSRNOP00000025223"/>
<dbReference type="DNASU" id="25635"/>
<dbReference type="Ensembl" id="ENSRNOT00000025223.4">
    <property type="protein sequence ID" value="ENSRNOP00000025223.1"/>
    <property type="gene ID" value="ENSRNOG00000018692.4"/>
</dbReference>
<dbReference type="GeneID" id="25635"/>
<dbReference type="KEGG" id="rno:25635"/>
<dbReference type="UCSC" id="RGD:3057">
    <property type="organism name" value="rat"/>
</dbReference>
<dbReference type="AGR" id="RGD:3057"/>
<dbReference type="CTD" id="4160"/>
<dbReference type="RGD" id="3057">
    <property type="gene designation" value="Mc4r"/>
</dbReference>
<dbReference type="eggNOG" id="KOG3656">
    <property type="taxonomic scope" value="Eukaryota"/>
</dbReference>
<dbReference type="GeneTree" id="ENSGT01120000271819"/>
<dbReference type="HOGENOM" id="CLU_009579_13_0_1"/>
<dbReference type="InParanoid" id="P70596"/>
<dbReference type="OMA" id="FYISCPH"/>
<dbReference type="OrthoDB" id="5970330at2759"/>
<dbReference type="PhylomeDB" id="P70596"/>
<dbReference type="TreeFam" id="TF332646"/>
<dbReference type="Reactome" id="R-RNO-375276">
    <property type="pathway name" value="Peptide ligand-binding receptors"/>
</dbReference>
<dbReference type="PRO" id="PR:P70596"/>
<dbReference type="Proteomes" id="UP000002494">
    <property type="component" value="Chromosome 18"/>
</dbReference>
<dbReference type="Bgee" id="ENSRNOG00000018692">
    <property type="expression patterns" value="Expressed in heart and 4 other cell types or tissues"/>
</dbReference>
<dbReference type="GO" id="GO:0005737">
    <property type="term" value="C:cytoplasm"/>
    <property type="evidence" value="ECO:0000318"/>
    <property type="project" value="GO_Central"/>
</dbReference>
<dbReference type="GO" id="GO:0005886">
    <property type="term" value="C:plasma membrane"/>
    <property type="evidence" value="ECO:0000318"/>
    <property type="project" value="GO_Central"/>
</dbReference>
<dbReference type="GO" id="GO:0042562">
    <property type="term" value="F:hormone binding"/>
    <property type="evidence" value="ECO:0000314"/>
    <property type="project" value="RGD"/>
</dbReference>
<dbReference type="GO" id="GO:0004977">
    <property type="term" value="F:melanocortin receptor activity"/>
    <property type="evidence" value="ECO:0000314"/>
    <property type="project" value="RGD"/>
</dbReference>
<dbReference type="GO" id="GO:0004980">
    <property type="term" value="F:melanocyte-stimulating hormone receptor activity"/>
    <property type="evidence" value="ECO:0000266"/>
    <property type="project" value="RGD"/>
</dbReference>
<dbReference type="GO" id="GO:0042923">
    <property type="term" value="F:neuropeptide binding"/>
    <property type="evidence" value="ECO:0000266"/>
    <property type="project" value="RGD"/>
</dbReference>
<dbReference type="GO" id="GO:0017046">
    <property type="term" value="F:peptide hormone binding"/>
    <property type="evidence" value="ECO:0000314"/>
    <property type="project" value="RGD"/>
</dbReference>
<dbReference type="GO" id="GO:0031625">
    <property type="term" value="F:ubiquitin protein ligase binding"/>
    <property type="evidence" value="ECO:0000266"/>
    <property type="project" value="RGD"/>
</dbReference>
<dbReference type="GO" id="GO:0007189">
    <property type="term" value="P:adenylate cyclase-activating G protein-coupled receptor signaling pathway"/>
    <property type="evidence" value="ECO:0000266"/>
    <property type="project" value="RGD"/>
</dbReference>
<dbReference type="GO" id="GO:0002024">
    <property type="term" value="P:diet induced thermogenesis"/>
    <property type="evidence" value="ECO:0000314"/>
    <property type="project" value="RGD"/>
</dbReference>
<dbReference type="GO" id="GO:0006112">
    <property type="term" value="P:energy reserve metabolic process"/>
    <property type="evidence" value="ECO:0000314"/>
    <property type="project" value="RGD"/>
</dbReference>
<dbReference type="GO" id="GO:0007631">
    <property type="term" value="P:feeding behavior"/>
    <property type="evidence" value="ECO:0000314"/>
    <property type="project" value="RGD"/>
</dbReference>
<dbReference type="GO" id="GO:0030073">
    <property type="term" value="P:insulin secretion"/>
    <property type="evidence" value="ECO:0000266"/>
    <property type="project" value="RGD"/>
</dbReference>
<dbReference type="GO" id="GO:2000252">
    <property type="term" value="P:negative regulation of feeding behavior"/>
    <property type="evidence" value="ECO:0000315"/>
    <property type="project" value="RGD"/>
</dbReference>
<dbReference type="GO" id="GO:0045780">
    <property type="term" value="P:positive regulation of bone resorption"/>
    <property type="evidence" value="ECO:0000266"/>
    <property type="project" value="RGD"/>
</dbReference>
<dbReference type="GO" id="GO:1903998">
    <property type="term" value="P:regulation of eating behavior"/>
    <property type="evidence" value="ECO:0000266"/>
    <property type="project" value="RGD"/>
</dbReference>
<dbReference type="GO" id="GO:0060259">
    <property type="term" value="P:regulation of feeding behavior"/>
    <property type="evidence" value="ECO:0000315"/>
    <property type="project" value="RGD"/>
</dbReference>
<dbReference type="GO" id="GO:2000821">
    <property type="term" value="P:regulation of grooming behavior"/>
    <property type="evidence" value="ECO:0000315"/>
    <property type="project" value="RGD"/>
</dbReference>
<dbReference type="GO" id="GO:0019222">
    <property type="term" value="P:regulation of metabolic process"/>
    <property type="evidence" value="ECO:0000266"/>
    <property type="project" value="RGD"/>
</dbReference>
<dbReference type="GO" id="GO:1903925">
    <property type="term" value="P:response to bisphenol A"/>
    <property type="evidence" value="ECO:0000270"/>
    <property type="project" value="RGD"/>
</dbReference>
<dbReference type="GO" id="GO:0032094">
    <property type="term" value="P:response to food"/>
    <property type="evidence" value="ECO:0000266"/>
    <property type="project" value="RGD"/>
</dbReference>
<dbReference type="GO" id="GO:0032868">
    <property type="term" value="P:response to insulin"/>
    <property type="evidence" value="ECO:0000266"/>
    <property type="project" value="RGD"/>
</dbReference>
<dbReference type="GO" id="GO:1990680">
    <property type="term" value="P:response to melanocyte-stimulating hormone"/>
    <property type="evidence" value="ECO:0000266"/>
    <property type="project" value="RGD"/>
</dbReference>
<dbReference type="CDD" id="cd15353">
    <property type="entry name" value="7tmA_MC4R"/>
    <property type="match status" value="1"/>
</dbReference>
<dbReference type="FunFam" id="1.20.1070.10:FF:000077">
    <property type="entry name" value="Melanocortin receptor 4"/>
    <property type="match status" value="1"/>
</dbReference>
<dbReference type="Gene3D" id="1.20.1070.10">
    <property type="entry name" value="Rhodopsin 7-helix transmembrane proteins"/>
    <property type="match status" value="1"/>
</dbReference>
<dbReference type="InterPro" id="IPR000276">
    <property type="entry name" value="GPCR_Rhodpsn"/>
</dbReference>
<dbReference type="InterPro" id="IPR017452">
    <property type="entry name" value="GPCR_Rhodpsn_7TM"/>
</dbReference>
<dbReference type="InterPro" id="IPR001908">
    <property type="entry name" value="MC3-5R"/>
</dbReference>
<dbReference type="InterPro" id="IPR000155">
    <property type="entry name" value="Mcort_rcpt_4"/>
</dbReference>
<dbReference type="InterPro" id="IPR001671">
    <property type="entry name" value="Melcrt_ACTH_rcpt"/>
</dbReference>
<dbReference type="PANTHER" id="PTHR22750">
    <property type="entry name" value="G-PROTEIN COUPLED RECEPTOR"/>
    <property type="match status" value="1"/>
</dbReference>
<dbReference type="Pfam" id="PF00001">
    <property type="entry name" value="7tm_1"/>
    <property type="match status" value="1"/>
</dbReference>
<dbReference type="PRINTS" id="PR00237">
    <property type="entry name" value="GPCRRHODOPSN"/>
</dbReference>
<dbReference type="PRINTS" id="PR00534">
    <property type="entry name" value="MCRFAMILY"/>
</dbReference>
<dbReference type="PRINTS" id="PR00535">
    <property type="entry name" value="MELNOCORTINR"/>
</dbReference>
<dbReference type="PRINTS" id="PR01062">
    <property type="entry name" value="MELNOCORTN4R"/>
</dbReference>
<dbReference type="SMART" id="SM01381">
    <property type="entry name" value="7TM_GPCR_Srsx"/>
    <property type="match status" value="1"/>
</dbReference>
<dbReference type="SUPFAM" id="SSF81321">
    <property type="entry name" value="Family A G protein-coupled receptor-like"/>
    <property type="match status" value="1"/>
</dbReference>
<dbReference type="PROSITE" id="PS00237">
    <property type="entry name" value="G_PROTEIN_RECEP_F1_1"/>
    <property type="match status" value="1"/>
</dbReference>
<dbReference type="PROSITE" id="PS50262">
    <property type="entry name" value="G_PROTEIN_RECEP_F1_2"/>
    <property type="match status" value="1"/>
</dbReference>
<sequence>MNSTHHHGMYTSLHLWNRSSHGLHGNASESLGKGHSDGGCYEQLFVSPEVFVTLGVISLLENILVIVAIAKNKNLHSPMYFFICSLAVADMLVSVSNGSETIVITLLNSTDTDAQSFTVNIDNVIDSVICSSLLASICSLLSIAVDRYFTIFYALQYHNIMTVRRVGIIISCIWAACTVSGVLFIIYSDSSAVIICLITMFFTMLVLMASLYVHMFLMARLHIKRIAVLPGTGTIRQGANMKGAITLTILIGVFVVCWAPFFLHLLFYISCPQNPYCVCFMSHFNLYLILIMCNAVIDPLIYALRSQELRKTFKEIICFYPLGGICELPGRY</sequence>
<accession>P70596</accession>
<comment type="function">
    <text evidence="2 3">Hormone receptor that acts as a key component of the leptin-melanocortin pathway at the intersection of homeostatic maintenance of energetic state. Plays a role in regulating food intake: activation by a stimulating hormone such as anorexigenic alpha-melanocyte stimulating hormone (alpha-MSH) inhibits appetite, whereas binding to a natural antagonist like Agouti-related protein/AGRP promotes appetite. G-protein-coupled receptor that activates conventional Galphas signaling leading to induction of anorexogenic signaling in the hypothalamus to result in negative energy balance (By similarity). Regulates the firing activity of neurons from the hypothalamus by alpha-MSH and AGRP independently of Galphas signaling by ligand-induced coupling of closure of inwardly rectifying potassium channel KCNJ13 (By similarity). In intestinal epithelial cells, plays a role in the inhibition of hepatic glucose production via nesfatin-1/NUCB2 leading to increased cyclic adenosine monophosphate (cAMP) levels and glucagon-like peptide 1 (GLP-1) secretion in the intestinal epithelium (By similarity).</text>
</comment>
<comment type="subunit">
    <text evidence="1 2">Homodimer; disulfide-linked, also forms higher order oligomers. Interacts with GNAS (By similarity). Interacts with ATRNL1 (By similarity). Interacts with MGRN1; this interaction competes with GNAS-binding and thus inhibits agonist-induced cAMP production. Interacts with MRAP and MRAP2; these associated factors increase ligand-sensitivity and generation of cAMP (By similarity).</text>
</comment>
<comment type="subcellular location">
    <subcellularLocation>
        <location evidence="2">Cell membrane</location>
        <topology evidence="4">Multi-pass membrane protein</topology>
    </subcellularLocation>
</comment>
<comment type="tissue specificity">
    <text>Brain, enriched in the striatum, nucleus accumbens, and periaqueductal gray.</text>
</comment>
<comment type="similarity">
    <text evidence="5">Belongs to the G-protein coupled receptor 1 family.</text>
</comment>
<proteinExistence type="evidence at transcript level"/>
<gene>
    <name type="primary">Mc4r</name>
</gene>
<reference key="1">
    <citation type="journal article" date="1996" name="Mol. Pharmacol.">
        <title>Morphine down-regulates melanocortin-4 receptor expression in brain regions that mediate opiate addiction.</title>
        <authorList>
            <person name="Alvaro J.D."/>
            <person name="Tatro J.B."/>
            <person name="Quillan J.M."/>
            <person name="Fogliano M."/>
            <person name="Eisenhard M."/>
            <person name="Lerner M.R."/>
            <person name="Nestler E.J."/>
            <person name="Duman R.S."/>
        </authorList>
    </citation>
    <scope>NUCLEOTIDE SEQUENCE [MRNA]</scope>
    <source>
        <strain>Sprague-Dawley</strain>
    </source>
</reference>
<evidence type="ECO:0000250" key="1"/>
<evidence type="ECO:0000250" key="2">
    <source>
        <dbReference type="UniProtKB" id="P32245"/>
    </source>
</evidence>
<evidence type="ECO:0000250" key="3">
    <source>
        <dbReference type="UniProtKB" id="P56450"/>
    </source>
</evidence>
<evidence type="ECO:0000255" key="4"/>
<evidence type="ECO:0000255" key="5">
    <source>
        <dbReference type="PROSITE-ProRule" id="PRU00521"/>
    </source>
</evidence>
<protein>
    <recommendedName>
        <fullName>Melanocortin receptor 4</fullName>
        <shortName>MC4-R</shortName>
    </recommendedName>
</protein>
<feature type="chain" id="PRO_0000069726" description="Melanocortin receptor 4">
    <location>
        <begin position="1"/>
        <end position="332"/>
    </location>
</feature>
<feature type="topological domain" description="Extracellular" evidence="4">
    <location>
        <begin position="1"/>
        <end position="43"/>
    </location>
</feature>
<feature type="transmembrane region" description="Helical; Name=1" evidence="4">
    <location>
        <begin position="44"/>
        <end position="69"/>
    </location>
</feature>
<feature type="topological domain" description="Cytoplasmic" evidence="4">
    <location>
        <begin position="70"/>
        <end position="81"/>
    </location>
</feature>
<feature type="transmembrane region" description="Helical; Name=2" evidence="4">
    <location>
        <begin position="82"/>
        <end position="106"/>
    </location>
</feature>
<feature type="topological domain" description="Extracellular" evidence="4">
    <location>
        <begin position="107"/>
        <end position="123"/>
    </location>
</feature>
<feature type="transmembrane region" description="Helical; Name=3" evidence="4">
    <location>
        <begin position="124"/>
        <end position="145"/>
    </location>
</feature>
<feature type="topological domain" description="Cytoplasmic" evidence="4">
    <location>
        <begin position="146"/>
        <end position="165"/>
    </location>
</feature>
<feature type="transmembrane region" description="Helical; Name=4" evidence="4">
    <location>
        <begin position="166"/>
        <end position="186"/>
    </location>
</feature>
<feature type="topological domain" description="Extracellular" evidence="4">
    <location>
        <begin position="187"/>
        <end position="191"/>
    </location>
</feature>
<feature type="transmembrane region" description="Helical; Name=5" evidence="4">
    <location>
        <begin position="192"/>
        <end position="215"/>
    </location>
</feature>
<feature type="topological domain" description="Cytoplasmic" evidence="4">
    <location>
        <begin position="216"/>
        <end position="248"/>
    </location>
</feature>
<feature type="transmembrane region" description="Helical; Name=6" evidence="4">
    <location>
        <begin position="249"/>
        <end position="271"/>
    </location>
</feature>
<feature type="topological domain" description="Extracellular" evidence="4">
    <location>
        <begin position="272"/>
        <end position="280"/>
    </location>
</feature>
<feature type="transmembrane region" description="Helical; Name=7" evidence="4">
    <location>
        <begin position="281"/>
        <end position="304"/>
    </location>
</feature>
<feature type="topological domain" description="Cytoplasmic" evidence="4">
    <location>
        <begin position="305"/>
        <end position="332"/>
    </location>
</feature>
<feature type="binding site" evidence="2">
    <location>
        <position position="100"/>
    </location>
    <ligand>
        <name>Ca(2+)</name>
        <dbReference type="ChEBI" id="CHEBI:29108"/>
    </ligand>
</feature>
<feature type="binding site" evidence="2">
    <location>
        <position position="122"/>
    </location>
    <ligand>
        <name>Ca(2+)</name>
        <dbReference type="ChEBI" id="CHEBI:29108"/>
    </ligand>
</feature>
<feature type="binding site" evidence="2">
    <location>
        <position position="126"/>
    </location>
    <ligand>
        <name>Ca(2+)</name>
        <dbReference type="ChEBI" id="CHEBI:29108"/>
    </ligand>
</feature>
<feature type="lipid moiety-binding region" description="S-palmitoyl cysteine" evidence="4">
    <location>
        <position position="318"/>
    </location>
</feature>
<feature type="glycosylation site" description="N-linked (GlcNAc...) asparagine" evidence="4">
    <location>
        <position position="2"/>
    </location>
</feature>
<feature type="glycosylation site" description="N-linked (GlcNAc...) asparagine" evidence="4">
    <location>
        <position position="17"/>
    </location>
</feature>
<feature type="glycosylation site" description="N-linked (GlcNAc...) asparagine" evidence="4">
    <location>
        <position position="26"/>
    </location>
</feature>
<feature type="disulfide bond" evidence="2">
    <location>
        <begin position="40"/>
        <end position="279"/>
    </location>
</feature>
<feature type="disulfide bond" description="Interchain" evidence="5">
    <location>
        <position position="84"/>
    </location>
</feature>
<feature type="disulfide bond" evidence="2">
    <location>
        <begin position="271"/>
        <end position="277"/>
    </location>
</feature>